<name>NCAP_VHSVM</name>
<evidence type="ECO:0000250" key="1"/>
<evidence type="ECO:0000256" key="2">
    <source>
        <dbReference type="SAM" id="MobiDB-lite"/>
    </source>
</evidence>
<evidence type="ECO:0000305" key="3"/>
<accession>P27371</accession>
<feature type="chain" id="PRO_0000222814" description="Nucleoprotein">
    <location>
        <begin position="1"/>
        <end position="404"/>
    </location>
</feature>
<feature type="region of interest" description="Disordered" evidence="2">
    <location>
        <begin position="357"/>
        <end position="404"/>
    </location>
</feature>
<feature type="compositionally biased region" description="Basic and acidic residues" evidence="2">
    <location>
        <begin position="357"/>
        <end position="376"/>
    </location>
</feature>
<feature type="compositionally biased region" description="Acidic residues" evidence="2">
    <location>
        <begin position="391"/>
        <end position="404"/>
    </location>
</feature>
<proteinExistence type="evidence at transcript level"/>
<gene>
    <name type="primary">N</name>
</gene>
<reference key="1">
    <citation type="journal article" date="1992" name="J. Gen. Virol.">
        <title>Nucleocapsid gene sequence of a North American isolate of viral haemorrhagic septicaemia virus, a fish rhabdovirus.</title>
        <authorList>
            <person name="Bernard J."/>
            <person name="Bremont M."/>
            <person name="Winton J."/>
        </authorList>
    </citation>
    <scope>NUCLEOTIDE SEQUENCE [MRNA]</scope>
</reference>
<comment type="function">
    <text evidence="1">Encapsidates the genome, protecting it from nucleases. If expressed without protein P it binds non-specifically RNA and therefore can bind it's own mRNA. Interaction with protein P abolishes any non-specific RNA binding, and prevents phosphorylation. The soluble N-P complex encapsidates specifically the genomic RNA, with protein N protecting the genome like a pearl necklace. The encapsidated genomic RNA is termed the nucleocapsid (NC) and serves as template for viral transcription and replication. Protein N binds protein P in the NC through a different interaction, and can be phosphorylated. Subsequent viral replication is dependent on intracellular concentration of newly synthesized protein N. During replication, encapsidation by protein N is coupled to RNA synthesis and all replicative products are resistant to nucleases (By similarity).</text>
</comment>
<comment type="subunit">
    <text evidence="1">Homomultimerizes to form the nucleocapsid. Binds to viral genomic RNA (By similarity).</text>
</comment>
<comment type="subcellular location">
    <subcellularLocation>
        <location>Virion</location>
    </subcellularLocation>
    <subcellularLocation>
        <location evidence="1">Host cytoplasm</location>
    </subcellularLocation>
</comment>
<comment type="similarity">
    <text evidence="3">Belongs to the novirhabdovirus nucleocapsid protein family.</text>
</comment>
<protein>
    <recommendedName>
        <fullName>Nucleoprotein</fullName>
        <shortName>NP</shortName>
    </recommendedName>
    <alternativeName>
        <fullName>Nucleocapsid protein</fullName>
        <shortName>Protein N</shortName>
    </alternativeName>
</protein>
<sequence>MEGGIRAAFSGLNDVRIDPTGGEGRVLVPGEVELIVYAGPFGTDDGKVIVDALAALGGPQTVQALSVLLSYVLQGSAQGDLEAKCKILTDMGFKVTQSPRATGIEAGILMPMRELAQTVNNDNLMDIVKGALMTCSLLDKYSVDKMIKYITKKLGELGSTQGVGELQHLSADKAAIRKLAGCVRPGQKITKALYAFILTEIADPTTQSRVQSMGALRLNGTGMTMIGLFTQAANNLGIPPAKLLEDLCMESLVESARRIIQLMRQVSEARSIQERYAIMMSRMLGESYYKSYRLNDNSKISYILSQISGKYAVDSLEGLEGIKVTEKFREFTELVAEVLVDKYERIGEDSTEVSDVIREAARQHARKASDKPEPKARNFRSSTGRGKEQEKEESDDDDYPGDSD</sequence>
<keyword id="KW-0167">Capsid protein</keyword>
<keyword id="KW-1139">Helical capsid protein</keyword>
<keyword id="KW-1035">Host cytoplasm</keyword>
<keyword id="KW-0597">Phosphoprotein</keyword>
<keyword id="KW-0687">Ribonucleoprotein</keyword>
<keyword id="KW-0694">RNA-binding</keyword>
<keyword id="KW-0543">Viral nucleoprotein</keyword>
<keyword id="KW-0946">Virion</keyword>
<organismHost>
    <name type="scientific">Coregonus lavaretus</name>
    <name type="common">Common whitefish</name>
    <name type="synonym">Salmo lavaretus</name>
    <dbReference type="NCBI Taxonomy" id="59291"/>
</organismHost>
<organismHost>
    <name type="scientific">Esox lucius</name>
    <name type="common">Northern pike</name>
    <dbReference type="NCBI Taxonomy" id="8010"/>
</organismHost>
<organismHost>
    <name type="scientific">Oncorhynchus kisutch</name>
    <name type="common">Coho salmon</name>
    <name type="synonym">Salmo kisutch</name>
    <dbReference type="NCBI Taxonomy" id="8019"/>
</organismHost>
<organismHost>
    <name type="scientific">Oncorhynchus mykiss</name>
    <name type="common">Rainbow trout</name>
    <name type="synonym">Salmo gairdneri</name>
    <dbReference type="NCBI Taxonomy" id="8022"/>
</organismHost>
<organismHost>
    <name type="scientific">Oncorhynchus tshawytscha</name>
    <name type="common">Chinook salmon</name>
    <name type="synonym">Salmo tshawytscha</name>
    <dbReference type="NCBI Taxonomy" id="74940"/>
</organismHost>
<organismHost>
    <name type="scientific">Salmo trutta</name>
    <name type="common">Brown trout</name>
    <dbReference type="NCBI Taxonomy" id="8032"/>
</organismHost>
<organismHost>
    <name type="scientific">Salvelinus namaycush</name>
    <name type="common">Lake trout</name>
    <name type="synonym">Salmo namaycush</name>
    <dbReference type="NCBI Taxonomy" id="8040"/>
</organismHost>
<organismHost>
    <name type="scientific">Thymallus thymallus</name>
    <name type="common">Grayling</name>
    <name type="synonym">Salmo thymallus</name>
    <dbReference type="NCBI Taxonomy" id="36185"/>
</organismHost>
<dbReference type="EMBL" id="X59241">
    <property type="protein sequence ID" value="CAA41930.1"/>
    <property type="molecule type" value="mRNA"/>
</dbReference>
<dbReference type="PIR" id="JQ1531">
    <property type="entry name" value="JQ1531"/>
</dbReference>
<dbReference type="GO" id="GO:0019029">
    <property type="term" value="C:helical viral capsid"/>
    <property type="evidence" value="ECO:0007669"/>
    <property type="project" value="UniProtKB-KW"/>
</dbReference>
<dbReference type="GO" id="GO:0030430">
    <property type="term" value="C:host cell cytoplasm"/>
    <property type="evidence" value="ECO:0007669"/>
    <property type="project" value="UniProtKB-SubCell"/>
</dbReference>
<dbReference type="GO" id="GO:1990904">
    <property type="term" value="C:ribonucleoprotein complex"/>
    <property type="evidence" value="ECO:0007669"/>
    <property type="project" value="UniProtKB-KW"/>
</dbReference>
<dbReference type="GO" id="GO:0019013">
    <property type="term" value="C:viral nucleocapsid"/>
    <property type="evidence" value="ECO:0007669"/>
    <property type="project" value="UniProtKB-KW"/>
</dbReference>
<dbReference type="GO" id="GO:0003723">
    <property type="term" value="F:RNA binding"/>
    <property type="evidence" value="ECO:0007669"/>
    <property type="project" value="UniProtKB-KW"/>
</dbReference>
<dbReference type="InterPro" id="IPR004902">
    <property type="entry name" value="Rhabdo_ncap_2"/>
</dbReference>
<dbReference type="Pfam" id="PF03216">
    <property type="entry name" value="Rhabdo_ncap_2"/>
    <property type="match status" value="1"/>
</dbReference>
<organism>
    <name type="scientific">Viral hemorrhagic septicemia virus (strain Makah)</name>
    <name type="common">VHSV</name>
    <dbReference type="NCBI Taxonomy" id="11289"/>
    <lineage>
        <taxon>Viruses</taxon>
        <taxon>Riboviria</taxon>
        <taxon>Orthornavirae</taxon>
        <taxon>Negarnaviricota</taxon>
        <taxon>Haploviricotina</taxon>
        <taxon>Monjiviricetes</taxon>
        <taxon>Mononegavirales</taxon>
        <taxon>Rhabdoviridae</taxon>
        <taxon>Gammarhabdovirinae</taxon>
        <taxon>Novirhabdovirus</taxon>
        <taxon>Novirhabdovirus piscine</taxon>
    </lineage>
</organism>